<protein>
    <recommendedName>
        <fullName>3-ketodihydrosphingosine reductase</fullName>
        <shortName>KDS reductase</shortName>
        <ecNumber evidence="4">1.1.1.102</ecNumber>
    </recommendedName>
    <alternativeName>
        <fullName>3-dehydrosphinganine reductase</fullName>
    </alternativeName>
    <alternativeName>
        <fullName>Follicular variant translocation protein 1 homolog</fullName>
        <shortName>FVT-1</shortName>
    </alternativeName>
</protein>
<organism>
    <name type="scientific">Mus musculus</name>
    <name type="common">Mouse</name>
    <dbReference type="NCBI Taxonomy" id="10090"/>
    <lineage>
        <taxon>Eukaryota</taxon>
        <taxon>Metazoa</taxon>
        <taxon>Chordata</taxon>
        <taxon>Craniata</taxon>
        <taxon>Vertebrata</taxon>
        <taxon>Euteleostomi</taxon>
        <taxon>Mammalia</taxon>
        <taxon>Eutheria</taxon>
        <taxon>Euarchontoglires</taxon>
        <taxon>Glires</taxon>
        <taxon>Rodentia</taxon>
        <taxon>Myomorpha</taxon>
        <taxon>Muroidea</taxon>
        <taxon>Muridae</taxon>
        <taxon>Murinae</taxon>
        <taxon>Mus</taxon>
        <taxon>Mus</taxon>
    </lineage>
</organism>
<evidence type="ECO:0000250" key="1">
    <source>
        <dbReference type="UniProtKB" id="O93868"/>
    </source>
</evidence>
<evidence type="ECO:0000250" key="2">
    <source>
        <dbReference type="UniProtKB" id="P0CR36"/>
    </source>
</evidence>
<evidence type="ECO:0000250" key="3">
    <source>
        <dbReference type="UniProtKB" id="P40471"/>
    </source>
</evidence>
<evidence type="ECO:0000250" key="4">
    <source>
        <dbReference type="UniProtKB" id="Q06136"/>
    </source>
</evidence>
<evidence type="ECO:0000255" key="5"/>
<evidence type="ECO:0000255" key="6">
    <source>
        <dbReference type="PROSITE-ProRule" id="PRU10001"/>
    </source>
</evidence>
<evidence type="ECO:0000269" key="7">
    <source>
    </source>
</evidence>
<evidence type="ECO:0000305" key="8"/>
<feature type="signal peptide" evidence="5">
    <location>
        <begin position="1"/>
        <end position="25"/>
    </location>
</feature>
<feature type="chain" id="PRO_0000031983" description="3-ketodihydrosphingosine reductase">
    <location>
        <begin position="26"/>
        <end position="332"/>
    </location>
</feature>
<feature type="topological domain" description="Cytoplasmic" evidence="5">
    <location>
        <begin position="26"/>
        <end position="270"/>
    </location>
</feature>
<feature type="transmembrane region" description="Helical" evidence="5">
    <location>
        <begin position="271"/>
        <end position="291"/>
    </location>
</feature>
<feature type="topological domain" description="Lumenal" evidence="5">
    <location>
        <begin position="292"/>
        <end position="293"/>
    </location>
</feature>
<feature type="transmembrane region" description="Helical" evidence="5">
    <location>
        <begin position="294"/>
        <end position="314"/>
    </location>
</feature>
<feature type="topological domain" description="Cytoplasmic" evidence="5">
    <location>
        <begin position="315"/>
        <end position="332"/>
    </location>
</feature>
<feature type="short sequence motif" description="GXSXG" evidence="3">
    <location>
        <begin position="39"/>
        <end position="43"/>
    </location>
</feature>
<feature type="active site" description="Proton donor" evidence="1">
    <location>
        <position position="172"/>
    </location>
</feature>
<feature type="active site" description="Proton acceptor" evidence="6">
    <location>
        <position position="186"/>
    </location>
</feature>
<feature type="active site" description="Lowers pKa of active site Tyr" evidence="1">
    <location>
        <position position="190"/>
    </location>
</feature>
<feature type="binding site" evidence="2">
    <location>
        <position position="39"/>
    </location>
    <ligand>
        <name>NADPH</name>
        <dbReference type="ChEBI" id="CHEBI:57783"/>
    </ligand>
</feature>
<feature type="binding site" evidence="2">
    <location>
        <position position="41"/>
    </location>
    <ligand>
        <name>NADPH</name>
        <dbReference type="ChEBI" id="CHEBI:57783"/>
    </ligand>
</feature>
<feature type="binding site" evidence="2">
    <location>
        <position position="42"/>
    </location>
    <ligand>
        <name>NADPH</name>
        <dbReference type="ChEBI" id="CHEBI:57783"/>
    </ligand>
</feature>
<feature type="binding site" evidence="2">
    <location>
        <position position="43"/>
    </location>
    <ligand>
        <name>NADPH</name>
        <dbReference type="ChEBI" id="CHEBI:57783"/>
    </ligand>
</feature>
<feature type="binding site" evidence="2">
    <location>
        <position position="64"/>
    </location>
    <ligand>
        <name>NADPH</name>
        <dbReference type="ChEBI" id="CHEBI:57783"/>
    </ligand>
</feature>
<feature type="binding site" evidence="2">
    <location>
        <position position="68"/>
    </location>
    <ligand>
        <name>NADPH</name>
        <dbReference type="ChEBI" id="CHEBI:57783"/>
    </ligand>
</feature>
<feature type="binding site" evidence="2">
    <location>
        <position position="93"/>
    </location>
    <ligand>
        <name>NADPH</name>
        <dbReference type="ChEBI" id="CHEBI:57783"/>
    </ligand>
</feature>
<feature type="binding site" evidence="1">
    <location>
        <position position="186"/>
    </location>
    <ligand>
        <name>NADP(+)</name>
        <dbReference type="ChEBI" id="CHEBI:58349"/>
    </ligand>
</feature>
<feature type="binding site" evidence="1">
    <location>
        <position position="190"/>
    </location>
    <ligand>
        <name>NADP(+)</name>
        <dbReference type="ChEBI" id="CHEBI:58349"/>
    </ligand>
</feature>
<keyword id="KW-0256">Endoplasmic reticulum</keyword>
<keyword id="KW-0443">Lipid metabolism</keyword>
<keyword id="KW-0472">Membrane</keyword>
<keyword id="KW-0521">NADP</keyword>
<keyword id="KW-0547">Nucleotide-binding</keyword>
<keyword id="KW-0560">Oxidoreductase</keyword>
<keyword id="KW-0656">Proto-oncogene</keyword>
<keyword id="KW-1185">Reference proteome</keyword>
<keyword id="KW-0732">Signal</keyword>
<keyword id="KW-0746">Sphingolipid metabolism</keyword>
<keyword id="KW-0812">Transmembrane</keyword>
<keyword id="KW-1133">Transmembrane helix</keyword>
<comment type="function">
    <text evidence="7">Catalyzes the reduction of 3'-oxosphinganine (3-ketodihydrosphingosine/KDS) to sphinganine (dihydrosphingosine/DHS), the second step of de novo sphingolipid biosynthesis.</text>
</comment>
<comment type="catalytic activity">
    <reaction evidence="4">
        <text>sphinganine + NADP(+) = 3-oxosphinganine + NADPH + H(+)</text>
        <dbReference type="Rhea" id="RHEA:22640"/>
        <dbReference type="ChEBI" id="CHEBI:15378"/>
        <dbReference type="ChEBI" id="CHEBI:57783"/>
        <dbReference type="ChEBI" id="CHEBI:57817"/>
        <dbReference type="ChEBI" id="CHEBI:58299"/>
        <dbReference type="ChEBI" id="CHEBI:58349"/>
        <dbReference type="EC" id="1.1.1.102"/>
    </reaction>
    <physiologicalReaction direction="right-to-left" evidence="4">
        <dbReference type="Rhea" id="RHEA:22642"/>
    </physiologicalReaction>
</comment>
<comment type="pathway">
    <text>Lipid metabolism; sphingolipid metabolism.</text>
</comment>
<comment type="subcellular location">
    <subcellularLocation>
        <location evidence="4">Endoplasmic reticulum membrane</location>
        <topology evidence="5">Multi-pass membrane protein</topology>
    </subcellularLocation>
</comment>
<comment type="similarity">
    <text evidence="8">Belongs to the short-chain dehydrogenases/reductases (SDR) family.</text>
</comment>
<accession>Q6GV12</accession>
<sequence>MLLLAAAGLVAFVLLLYMVSPLISPKPLALPGAHVVVTGGSSGIGKCIAIECYKQGAFITLVARNEDKLLQAKKDIEKHSINDKQVVLCISVDVSQDYNQVENVIKQAQEKLGPVDMLVNCAGTSMSGKFEELEVSSFEKLMSINYLGSVYPSRAVITTMKERRVGRIVFVSSQAGQLGLFGFTAYSSSKFAIRGLAEALQMEVKPYNVYVTVAYPPDTDTPGLAEENKTKPLETRLISETTAICKPEQVAKQIVKDAIQGNFNSSIGSDGYMLSSLTCGMAPVTSITEGLQQVVTMGLFRTIALFYLGSFDNIVRRCMVQKAKPEVVDKTA</sequence>
<proteinExistence type="evidence at protein level"/>
<dbReference type="EC" id="1.1.1.102" evidence="4"/>
<dbReference type="EMBL" id="AY634684">
    <property type="protein sequence ID" value="AAT57900.1"/>
    <property type="molecule type" value="mRNA"/>
</dbReference>
<dbReference type="CCDS" id="CCDS15210.1"/>
<dbReference type="RefSeq" id="NP_081810.1">
    <property type="nucleotide sequence ID" value="NM_027534.2"/>
</dbReference>
<dbReference type="SMR" id="Q6GV12"/>
<dbReference type="BioGRID" id="214234">
    <property type="interactions" value="3"/>
</dbReference>
<dbReference type="FunCoup" id="Q6GV12">
    <property type="interactions" value="2276"/>
</dbReference>
<dbReference type="STRING" id="10090.ENSMUSP00000010049"/>
<dbReference type="GlyGen" id="Q6GV12">
    <property type="glycosylation" value="1 site"/>
</dbReference>
<dbReference type="iPTMnet" id="Q6GV12"/>
<dbReference type="PhosphoSitePlus" id="Q6GV12"/>
<dbReference type="PaxDb" id="10090-ENSMUSP00000010049"/>
<dbReference type="ProteomicsDB" id="264994"/>
<dbReference type="Pumba" id="Q6GV12"/>
<dbReference type="Antibodypedia" id="23084">
    <property type="antibodies" value="143 antibodies from 24 providers"/>
</dbReference>
<dbReference type="Ensembl" id="ENSMUST00000010049.6">
    <property type="protein sequence ID" value="ENSMUSP00000010049.5"/>
    <property type="gene ID" value="ENSMUSG00000009905.6"/>
</dbReference>
<dbReference type="GeneID" id="70750"/>
<dbReference type="KEGG" id="mmu:70750"/>
<dbReference type="UCSC" id="uc007cgy.2">
    <property type="organism name" value="mouse"/>
</dbReference>
<dbReference type="AGR" id="MGI:1918000"/>
<dbReference type="CTD" id="2531"/>
<dbReference type="MGI" id="MGI:1918000">
    <property type="gene designation" value="Kdsr"/>
</dbReference>
<dbReference type="VEuPathDB" id="HostDB:ENSMUSG00000009905"/>
<dbReference type="eggNOG" id="KOG1210">
    <property type="taxonomic scope" value="Eukaryota"/>
</dbReference>
<dbReference type="GeneTree" id="ENSGT00940000156961"/>
<dbReference type="HOGENOM" id="CLU_010194_3_2_1"/>
<dbReference type="InParanoid" id="Q6GV12"/>
<dbReference type="OMA" id="ICGVFEE"/>
<dbReference type="OrthoDB" id="37659at2759"/>
<dbReference type="PhylomeDB" id="Q6GV12"/>
<dbReference type="TreeFam" id="TF105430"/>
<dbReference type="BRENDA" id="1.1.1.102">
    <property type="organism ID" value="3474"/>
</dbReference>
<dbReference type="Reactome" id="R-MMU-1660661">
    <property type="pathway name" value="Sphingolipid de novo biosynthesis"/>
</dbReference>
<dbReference type="UniPathway" id="UPA00222"/>
<dbReference type="BioGRID-ORCS" id="70750">
    <property type="hits" value="23 hits in 80 CRISPR screens"/>
</dbReference>
<dbReference type="ChiTaRS" id="Kdsr">
    <property type="organism name" value="mouse"/>
</dbReference>
<dbReference type="PRO" id="PR:Q6GV12"/>
<dbReference type="Proteomes" id="UP000000589">
    <property type="component" value="Chromosome 1"/>
</dbReference>
<dbReference type="RNAct" id="Q6GV12">
    <property type="molecule type" value="protein"/>
</dbReference>
<dbReference type="Bgee" id="ENSMUSG00000009905">
    <property type="expression patterns" value="Expressed in decidua and 213 other cell types or tissues"/>
</dbReference>
<dbReference type="ExpressionAtlas" id="Q6GV12">
    <property type="expression patterns" value="baseline and differential"/>
</dbReference>
<dbReference type="GO" id="GO:0005783">
    <property type="term" value="C:endoplasmic reticulum"/>
    <property type="evidence" value="ECO:0000266"/>
    <property type="project" value="MGI"/>
</dbReference>
<dbReference type="GO" id="GO:0005789">
    <property type="term" value="C:endoplasmic reticulum membrane"/>
    <property type="evidence" value="ECO:0007669"/>
    <property type="project" value="UniProtKB-SubCell"/>
</dbReference>
<dbReference type="GO" id="GO:0047560">
    <property type="term" value="F:3-dehydrosphinganine reductase activity"/>
    <property type="evidence" value="ECO:0000250"/>
    <property type="project" value="UniProtKB"/>
</dbReference>
<dbReference type="GO" id="GO:0070402">
    <property type="term" value="F:NADPH binding"/>
    <property type="evidence" value="ECO:0000250"/>
    <property type="project" value="UniProtKB"/>
</dbReference>
<dbReference type="GO" id="GO:0006666">
    <property type="term" value="P:3-keto-sphinganine metabolic process"/>
    <property type="evidence" value="ECO:0000250"/>
    <property type="project" value="UniProtKB"/>
</dbReference>
<dbReference type="GO" id="GO:0030148">
    <property type="term" value="P:sphingolipid biosynthetic process"/>
    <property type="evidence" value="ECO:0000316"/>
    <property type="project" value="MGI"/>
</dbReference>
<dbReference type="CDD" id="cd08939">
    <property type="entry name" value="KDSR-like_SDR_c"/>
    <property type="match status" value="1"/>
</dbReference>
<dbReference type="FunFam" id="3.40.50.720:FF:000165">
    <property type="entry name" value="3-ketodihydrosphingosine reductase"/>
    <property type="match status" value="1"/>
</dbReference>
<dbReference type="Gene3D" id="3.40.50.720">
    <property type="entry name" value="NAD(P)-binding Rossmann-like Domain"/>
    <property type="match status" value="1"/>
</dbReference>
<dbReference type="InterPro" id="IPR045022">
    <property type="entry name" value="KDSR-like"/>
</dbReference>
<dbReference type="InterPro" id="IPR036291">
    <property type="entry name" value="NAD(P)-bd_dom_sf"/>
</dbReference>
<dbReference type="InterPro" id="IPR020904">
    <property type="entry name" value="Sc_DH/Rdtase_CS"/>
</dbReference>
<dbReference type="InterPro" id="IPR002347">
    <property type="entry name" value="SDR_fam"/>
</dbReference>
<dbReference type="PANTHER" id="PTHR43550">
    <property type="entry name" value="3-KETODIHYDROSPHINGOSINE REDUCTASE"/>
    <property type="match status" value="1"/>
</dbReference>
<dbReference type="PANTHER" id="PTHR43550:SF3">
    <property type="entry name" value="3-KETODIHYDROSPHINGOSINE REDUCTASE"/>
    <property type="match status" value="1"/>
</dbReference>
<dbReference type="Pfam" id="PF00106">
    <property type="entry name" value="adh_short"/>
    <property type="match status" value="1"/>
</dbReference>
<dbReference type="PRINTS" id="PR00081">
    <property type="entry name" value="GDHRDH"/>
</dbReference>
<dbReference type="PRINTS" id="PR00080">
    <property type="entry name" value="SDRFAMILY"/>
</dbReference>
<dbReference type="SUPFAM" id="SSF51735">
    <property type="entry name" value="NAD(P)-binding Rossmann-fold domains"/>
    <property type="match status" value="1"/>
</dbReference>
<dbReference type="PROSITE" id="PS00061">
    <property type="entry name" value="ADH_SHORT"/>
    <property type="match status" value="1"/>
</dbReference>
<gene>
    <name type="primary">Kdsr</name>
    <name type="synonym">Fvt1</name>
</gene>
<name>KDSR_MOUSE</name>
<reference key="1">
    <citation type="journal article" date="2004" name="J. Biol. Chem.">
        <title>FVT-1 is a mammalian 3-ketodihydrosphingosine reductase with an active site that faces the cytosolic side of the endoplasmic reticulum membrane.</title>
        <authorList>
            <person name="Kihara A."/>
            <person name="Igarashi Y."/>
        </authorList>
    </citation>
    <scope>NUCLEOTIDE SEQUENCE [MRNA]</scope>
    <scope>FUNCTION</scope>
</reference>
<reference key="2">
    <citation type="journal article" date="2010" name="Cell">
        <title>A tissue-specific atlas of mouse protein phosphorylation and expression.</title>
        <authorList>
            <person name="Huttlin E.L."/>
            <person name="Jedrychowski M.P."/>
            <person name="Elias J.E."/>
            <person name="Goswami T."/>
            <person name="Rad R."/>
            <person name="Beausoleil S.A."/>
            <person name="Villen J."/>
            <person name="Haas W."/>
            <person name="Sowa M.E."/>
            <person name="Gygi S.P."/>
        </authorList>
    </citation>
    <scope>IDENTIFICATION BY MASS SPECTROMETRY [LARGE SCALE ANALYSIS]</scope>
    <source>
        <tissue>Brain</tissue>
        <tissue>Kidney</tissue>
        <tissue>Liver</tissue>
        <tissue>Lung</tissue>
        <tissue>Pancreas</tissue>
    </source>
</reference>